<comment type="subunit">
    <text evidence="1">Part of the 30S ribosomal subunit.</text>
</comment>
<comment type="subcellular location">
    <subcellularLocation>
        <location>Plastid</location>
        <location>Chloroplast</location>
    </subcellularLocation>
</comment>
<comment type="similarity">
    <text evidence="2">Belongs to the universal ribosomal protein uS15 family.</text>
</comment>
<sequence>MKKKGGRKIFGFMVKEEKEENWGSVEFQVFSFTNKIRRLASHLELHKKDFSSERGLRRLLGKRQRLLAYLAKKNRVRYKKLISQLDIRER</sequence>
<reference key="1">
    <citation type="journal article" date="2004" name="Gene">
        <title>The complete nucleotide sequence of wild rice (Oryza nivara) chloroplast genome: first genome wide comparative sequence analysis of wild and cultivated rice.</title>
        <authorList>
            <person name="Masood M.S."/>
            <person name="Nishikawa T."/>
            <person name="Fukuoka S."/>
            <person name="Njenga P.K."/>
            <person name="Tsudzuki T."/>
            <person name="Kadowaki K."/>
        </authorList>
    </citation>
    <scope>NUCLEOTIDE SEQUENCE [LARGE SCALE GENOMIC DNA]</scope>
    <source>
        <strain evidence="3">cv. SL10</strain>
    </source>
</reference>
<geneLocation type="chloroplast"/>
<protein>
    <recommendedName>
        <fullName evidence="2">Small ribosomal subunit protein uS15c</fullName>
    </recommendedName>
    <alternativeName>
        <fullName>30S ribosomal protein S15, chloroplastic</fullName>
    </alternativeName>
</protein>
<proteinExistence type="inferred from homology"/>
<keyword id="KW-0150">Chloroplast</keyword>
<keyword id="KW-0934">Plastid</keyword>
<keyword id="KW-1185">Reference proteome</keyword>
<keyword id="KW-0687">Ribonucleoprotein</keyword>
<keyword id="KW-0689">Ribosomal protein</keyword>
<evidence type="ECO:0000250" key="1"/>
<evidence type="ECO:0000305" key="2"/>
<evidence type="ECO:0000312" key="3">
    <source>
        <dbReference type="Proteomes" id="UP000006591"/>
    </source>
</evidence>
<name>RR15_ORYNI</name>
<organism>
    <name type="scientific">Oryza nivara</name>
    <name type="common">Indian wild rice</name>
    <name type="synonym">Oryza sativa f. spontanea</name>
    <dbReference type="NCBI Taxonomy" id="4536"/>
    <lineage>
        <taxon>Eukaryota</taxon>
        <taxon>Viridiplantae</taxon>
        <taxon>Streptophyta</taxon>
        <taxon>Embryophyta</taxon>
        <taxon>Tracheophyta</taxon>
        <taxon>Spermatophyta</taxon>
        <taxon>Magnoliopsida</taxon>
        <taxon>Liliopsida</taxon>
        <taxon>Poales</taxon>
        <taxon>Poaceae</taxon>
        <taxon>BOP clade</taxon>
        <taxon>Oryzoideae</taxon>
        <taxon>Oryzeae</taxon>
        <taxon>Oryzinae</taxon>
        <taxon>Oryza</taxon>
    </lineage>
</organism>
<dbReference type="EMBL" id="AP006728">
    <property type="protein sequence ID" value="BAD26840.1"/>
    <property type="molecule type" value="Genomic_DNA"/>
</dbReference>
<dbReference type="EMBL" id="AP006728">
    <property type="protein sequence ID" value="BAD26852.1"/>
    <property type="molecule type" value="Genomic_DNA"/>
</dbReference>
<dbReference type="SMR" id="Q6ENB2"/>
<dbReference type="STRING" id="4536.Q6ENB2"/>
<dbReference type="Proteomes" id="UP000006591">
    <property type="component" value="Chloroplast"/>
</dbReference>
<dbReference type="GO" id="GO:0009507">
    <property type="term" value="C:chloroplast"/>
    <property type="evidence" value="ECO:0007669"/>
    <property type="project" value="UniProtKB-SubCell"/>
</dbReference>
<dbReference type="GO" id="GO:0009536">
    <property type="term" value="C:plastid"/>
    <property type="evidence" value="ECO:0000305"/>
    <property type="project" value="Gramene"/>
</dbReference>
<dbReference type="GO" id="GO:1990904">
    <property type="term" value="C:ribonucleoprotein complex"/>
    <property type="evidence" value="ECO:0007669"/>
    <property type="project" value="UniProtKB-KW"/>
</dbReference>
<dbReference type="GO" id="GO:0005840">
    <property type="term" value="C:ribosome"/>
    <property type="evidence" value="ECO:0007669"/>
    <property type="project" value="UniProtKB-KW"/>
</dbReference>
<dbReference type="GO" id="GO:0003735">
    <property type="term" value="F:structural constituent of ribosome"/>
    <property type="evidence" value="ECO:0007669"/>
    <property type="project" value="InterPro"/>
</dbReference>
<dbReference type="GO" id="GO:0006412">
    <property type="term" value="P:translation"/>
    <property type="evidence" value="ECO:0007669"/>
    <property type="project" value="UniProtKB-UniRule"/>
</dbReference>
<dbReference type="CDD" id="cd00353">
    <property type="entry name" value="Ribosomal_S15p_S13e"/>
    <property type="match status" value="1"/>
</dbReference>
<dbReference type="Gene3D" id="1.10.287.10">
    <property type="entry name" value="S15/NS1, RNA-binding"/>
    <property type="match status" value="1"/>
</dbReference>
<dbReference type="HAMAP" id="MF_01343_B">
    <property type="entry name" value="Ribosomal_uS15_B"/>
    <property type="match status" value="1"/>
</dbReference>
<dbReference type="InterPro" id="IPR000589">
    <property type="entry name" value="Ribosomal_uS15"/>
</dbReference>
<dbReference type="InterPro" id="IPR005290">
    <property type="entry name" value="Ribosomal_uS15_bac-type"/>
</dbReference>
<dbReference type="InterPro" id="IPR009068">
    <property type="entry name" value="uS15_NS1_RNA-bd_sf"/>
</dbReference>
<dbReference type="NCBIfam" id="TIGR00952">
    <property type="entry name" value="S15_bact"/>
    <property type="match status" value="1"/>
</dbReference>
<dbReference type="PANTHER" id="PTHR23321">
    <property type="entry name" value="RIBOSOMAL PROTEIN S15, BACTERIAL AND ORGANELLAR"/>
    <property type="match status" value="1"/>
</dbReference>
<dbReference type="PANTHER" id="PTHR23321:SF26">
    <property type="entry name" value="SMALL RIBOSOMAL SUBUNIT PROTEIN US15M"/>
    <property type="match status" value="1"/>
</dbReference>
<dbReference type="Pfam" id="PF00312">
    <property type="entry name" value="Ribosomal_S15"/>
    <property type="match status" value="1"/>
</dbReference>
<dbReference type="SMART" id="SM01387">
    <property type="entry name" value="Ribosomal_S15"/>
    <property type="match status" value="1"/>
</dbReference>
<dbReference type="SUPFAM" id="SSF47060">
    <property type="entry name" value="S15/NS1 RNA-binding domain"/>
    <property type="match status" value="1"/>
</dbReference>
<dbReference type="PROSITE" id="PS00362">
    <property type="entry name" value="RIBOSOMAL_S15"/>
    <property type="match status" value="1"/>
</dbReference>
<gene>
    <name type="primary">rps15-A</name>
</gene>
<gene>
    <name type="primary">rps15-B</name>
</gene>
<accession>Q6ENB2</accession>
<feature type="chain" id="PRO_0000115642" description="Small ribosomal subunit protein uS15c">
    <location>
        <begin position="1"/>
        <end position="90"/>
    </location>
</feature>